<reference key="1">
    <citation type="journal article" date="2008" name="Genome Res.">
        <title>Comparative genome analysis of Salmonella enteritidis PT4 and Salmonella gallinarum 287/91 provides insights into evolutionary and host adaptation pathways.</title>
        <authorList>
            <person name="Thomson N.R."/>
            <person name="Clayton D.J."/>
            <person name="Windhorst D."/>
            <person name="Vernikos G."/>
            <person name="Davidson S."/>
            <person name="Churcher C."/>
            <person name="Quail M.A."/>
            <person name="Stevens M."/>
            <person name="Jones M.A."/>
            <person name="Watson M."/>
            <person name="Barron A."/>
            <person name="Layton A."/>
            <person name="Pickard D."/>
            <person name="Kingsley R.A."/>
            <person name="Bignell A."/>
            <person name="Clark L."/>
            <person name="Harris B."/>
            <person name="Ormond D."/>
            <person name="Abdellah Z."/>
            <person name="Brooks K."/>
            <person name="Cherevach I."/>
            <person name="Chillingworth T."/>
            <person name="Woodward J."/>
            <person name="Norberczak H."/>
            <person name="Lord A."/>
            <person name="Arrowsmith C."/>
            <person name="Jagels K."/>
            <person name="Moule S."/>
            <person name="Mungall K."/>
            <person name="Saunders M."/>
            <person name="Whitehead S."/>
            <person name="Chabalgoity J.A."/>
            <person name="Maskell D."/>
            <person name="Humphreys T."/>
            <person name="Roberts M."/>
            <person name="Barrow P.A."/>
            <person name="Dougan G."/>
            <person name="Parkhill J."/>
        </authorList>
    </citation>
    <scope>NUCLEOTIDE SEQUENCE [LARGE SCALE GENOMIC DNA]</scope>
    <source>
        <strain>P125109</strain>
    </source>
</reference>
<dbReference type="EC" id="1.9.6.1" evidence="1"/>
<dbReference type="EMBL" id="AM933172">
    <property type="protein sequence ID" value="CAR33826.1"/>
    <property type="molecule type" value="Genomic_DNA"/>
</dbReference>
<dbReference type="RefSeq" id="WP_000778097.1">
    <property type="nucleotide sequence ID" value="NC_011294.1"/>
</dbReference>
<dbReference type="SMR" id="B5R233"/>
<dbReference type="KEGG" id="set:SEN2242"/>
<dbReference type="HOGENOM" id="CLU_000422_13_4_6"/>
<dbReference type="Proteomes" id="UP000000613">
    <property type="component" value="Chromosome"/>
</dbReference>
<dbReference type="GO" id="GO:0016020">
    <property type="term" value="C:membrane"/>
    <property type="evidence" value="ECO:0007669"/>
    <property type="project" value="TreeGrafter"/>
</dbReference>
<dbReference type="GO" id="GO:0009325">
    <property type="term" value="C:nitrate reductase complex"/>
    <property type="evidence" value="ECO:0007669"/>
    <property type="project" value="TreeGrafter"/>
</dbReference>
<dbReference type="GO" id="GO:0042597">
    <property type="term" value="C:periplasmic space"/>
    <property type="evidence" value="ECO:0007669"/>
    <property type="project" value="UniProtKB-SubCell"/>
</dbReference>
<dbReference type="GO" id="GO:0051539">
    <property type="term" value="F:4 iron, 4 sulfur cluster binding"/>
    <property type="evidence" value="ECO:0007669"/>
    <property type="project" value="UniProtKB-KW"/>
</dbReference>
<dbReference type="GO" id="GO:0009055">
    <property type="term" value="F:electron transfer activity"/>
    <property type="evidence" value="ECO:0007669"/>
    <property type="project" value="UniProtKB-UniRule"/>
</dbReference>
<dbReference type="GO" id="GO:0005506">
    <property type="term" value="F:iron ion binding"/>
    <property type="evidence" value="ECO:0007669"/>
    <property type="project" value="UniProtKB-UniRule"/>
</dbReference>
<dbReference type="GO" id="GO:0030151">
    <property type="term" value="F:molybdenum ion binding"/>
    <property type="evidence" value="ECO:0007669"/>
    <property type="project" value="InterPro"/>
</dbReference>
<dbReference type="GO" id="GO:0043546">
    <property type="term" value="F:molybdopterin cofactor binding"/>
    <property type="evidence" value="ECO:0007669"/>
    <property type="project" value="InterPro"/>
</dbReference>
<dbReference type="GO" id="GO:0050140">
    <property type="term" value="F:nitrate reductase (cytochrome) activity"/>
    <property type="evidence" value="ECO:0007669"/>
    <property type="project" value="UniProtKB-EC"/>
</dbReference>
<dbReference type="GO" id="GO:0045333">
    <property type="term" value="P:cellular respiration"/>
    <property type="evidence" value="ECO:0007669"/>
    <property type="project" value="UniProtKB-ARBA"/>
</dbReference>
<dbReference type="GO" id="GO:0006777">
    <property type="term" value="P:Mo-molybdopterin cofactor biosynthetic process"/>
    <property type="evidence" value="ECO:0007669"/>
    <property type="project" value="UniProtKB-UniRule"/>
</dbReference>
<dbReference type="GO" id="GO:0042128">
    <property type="term" value="P:nitrate assimilation"/>
    <property type="evidence" value="ECO:0007669"/>
    <property type="project" value="UniProtKB-UniRule"/>
</dbReference>
<dbReference type="CDD" id="cd02791">
    <property type="entry name" value="MopB_CT_Nitrate-R-NapA-like"/>
    <property type="match status" value="1"/>
</dbReference>
<dbReference type="CDD" id="cd02754">
    <property type="entry name" value="MopB_Nitrate-R-NapA-like"/>
    <property type="match status" value="1"/>
</dbReference>
<dbReference type="FunFam" id="2.40.40.20:FF:000005">
    <property type="entry name" value="Periplasmic nitrate reductase"/>
    <property type="match status" value="1"/>
</dbReference>
<dbReference type="FunFam" id="3.40.228.10:FF:000001">
    <property type="entry name" value="Periplasmic nitrate reductase"/>
    <property type="match status" value="1"/>
</dbReference>
<dbReference type="Gene3D" id="2.40.40.20">
    <property type="match status" value="1"/>
</dbReference>
<dbReference type="Gene3D" id="3.30.200.210">
    <property type="match status" value="1"/>
</dbReference>
<dbReference type="Gene3D" id="3.40.50.740">
    <property type="match status" value="1"/>
</dbReference>
<dbReference type="Gene3D" id="3.40.228.10">
    <property type="entry name" value="Dimethylsulfoxide Reductase, domain 2"/>
    <property type="match status" value="1"/>
</dbReference>
<dbReference type="HAMAP" id="MF_01630">
    <property type="entry name" value="Nitrate_reduct_NapA"/>
    <property type="match status" value="1"/>
</dbReference>
<dbReference type="InterPro" id="IPR009010">
    <property type="entry name" value="Asp_de-COase-like_dom_sf"/>
</dbReference>
<dbReference type="InterPro" id="IPR041957">
    <property type="entry name" value="CT_Nitrate-R-NapA-like"/>
</dbReference>
<dbReference type="InterPro" id="IPR006657">
    <property type="entry name" value="MoPterin_dinucl-bd_dom"/>
</dbReference>
<dbReference type="InterPro" id="IPR006656">
    <property type="entry name" value="Mopterin_OxRdtase"/>
</dbReference>
<dbReference type="InterPro" id="IPR006963">
    <property type="entry name" value="Mopterin_OxRdtase_4Fe-4S_dom"/>
</dbReference>
<dbReference type="InterPro" id="IPR027467">
    <property type="entry name" value="MopterinOxRdtase_cofactor_BS"/>
</dbReference>
<dbReference type="InterPro" id="IPR010051">
    <property type="entry name" value="Periplasm_NO3_reductase_lsu"/>
</dbReference>
<dbReference type="InterPro" id="IPR050123">
    <property type="entry name" value="Prok_molybdopt-oxidoreductase"/>
</dbReference>
<dbReference type="InterPro" id="IPR006311">
    <property type="entry name" value="TAT_signal"/>
</dbReference>
<dbReference type="InterPro" id="IPR019546">
    <property type="entry name" value="TAT_signal_bac_arc"/>
</dbReference>
<dbReference type="NCBIfam" id="TIGR01706">
    <property type="entry name" value="NAPA"/>
    <property type="match status" value="1"/>
</dbReference>
<dbReference type="NCBIfam" id="NF010055">
    <property type="entry name" value="PRK13532.1"/>
    <property type="match status" value="1"/>
</dbReference>
<dbReference type="NCBIfam" id="TIGR01409">
    <property type="entry name" value="TAT_signal_seq"/>
    <property type="match status" value="1"/>
</dbReference>
<dbReference type="PANTHER" id="PTHR43105:SF11">
    <property type="entry name" value="PERIPLASMIC NITRATE REDUCTASE"/>
    <property type="match status" value="1"/>
</dbReference>
<dbReference type="PANTHER" id="PTHR43105">
    <property type="entry name" value="RESPIRATORY NITRATE REDUCTASE"/>
    <property type="match status" value="1"/>
</dbReference>
<dbReference type="Pfam" id="PF04879">
    <property type="entry name" value="Molybdop_Fe4S4"/>
    <property type="match status" value="1"/>
</dbReference>
<dbReference type="Pfam" id="PF00384">
    <property type="entry name" value="Molybdopterin"/>
    <property type="match status" value="1"/>
</dbReference>
<dbReference type="Pfam" id="PF01568">
    <property type="entry name" value="Molydop_binding"/>
    <property type="match status" value="1"/>
</dbReference>
<dbReference type="SMART" id="SM00926">
    <property type="entry name" value="Molybdop_Fe4S4"/>
    <property type="match status" value="1"/>
</dbReference>
<dbReference type="SUPFAM" id="SSF50692">
    <property type="entry name" value="ADC-like"/>
    <property type="match status" value="1"/>
</dbReference>
<dbReference type="SUPFAM" id="SSF53706">
    <property type="entry name" value="Formate dehydrogenase/DMSO reductase, domains 1-3"/>
    <property type="match status" value="1"/>
</dbReference>
<dbReference type="PROSITE" id="PS51669">
    <property type="entry name" value="4FE4S_MOW_BIS_MGD"/>
    <property type="match status" value="1"/>
</dbReference>
<dbReference type="PROSITE" id="PS00551">
    <property type="entry name" value="MOLYBDOPTERIN_PROK_1"/>
    <property type="match status" value="1"/>
</dbReference>
<dbReference type="PROSITE" id="PS51318">
    <property type="entry name" value="TAT"/>
    <property type="match status" value="1"/>
</dbReference>
<sequence>MKLSRRSFMKANAVAAAAAAAGLSVPGVARAVVGQQEAIKWDKAPCRFCGTGCGVLVGTQQGRVVACQGDPDAPVNRGLNCIKGYFLPKIMYGKDRLTQPMLRMKDGSYHKDGEFTPVSWEQAFDVMEEKFKTSLKEKGPEAIGMFGSGQWTIWEGYAAAKLFKAGFRSNNIDPNARHCMASAVVGFMRTFGMDEPMGCYDDIEQADAFVLWGSNMAEMHPILWSRITNRRLSDPNVKVAVLSTFQHRSFELADNGIVFTPQSDLVILNYIANYIIQNNAVNQDFFTKHVNLRKGATDIGYGLRPTHPLEKAAKNPGSDASEPMSFDEYKAFVAEYTLDKTAEMTGVPKDQLEQLAQLYADPNKRVISYWTMGFNQHTRGVWANNLVYNLHLLTGKISQPGCGPFSLTGQPSACGTAREVGTFSHRLPADMVVTNEKHRDICEKHWQIPAGTIPAKVGLHAVAQDRALKDGKLNVYWVMCNNNMQAGPNINEDRMPGWRDPRNFIIVSDPYPTVSALSADLILPTAMWVEKEGAYGNAERRTQFWRQQIKAPGEAKSDLWQLVQFSRRFKTEEVWPEALLAQKPELRGKTLYDVLFATPAVSKFPLSELKEDQLNDESRELGFYLQKGLFEEYAWFGRGHGHDLAPFDDYHNARGLRWPVVEGKETQWRYSEGNDPYVKAGEGYKFYGKPDGKAVIFALPFEPAAESPDNEYDLWLSTGRVLEHWHTGSMTRRVPELHRAFPEAVVFIHPLDAKARDLRRGDKVKVSSRRGEVISIVETRGRNRPPQGLVYMPFFDAAQLVNNLTLDATDPLSKETDFKKCAVKLAKV</sequence>
<proteinExistence type="inferred from homology"/>
<keyword id="KW-0004">4Fe-4S</keyword>
<keyword id="KW-0249">Electron transport</keyword>
<keyword id="KW-0408">Iron</keyword>
<keyword id="KW-0411">Iron-sulfur</keyword>
<keyword id="KW-0479">Metal-binding</keyword>
<keyword id="KW-0500">Molybdenum</keyword>
<keyword id="KW-0534">Nitrate assimilation</keyword>
<keyword id="KW-0560">Oxidoreductase</keyword>
<keyword id="KW-0574">Periplasm</keyword>
<keyword id="KW-0732">Signal</keyword>
<keyword id="KW-0813">Transport</keyword>
<protein>
    <recommendedName>
        <fullName evidence="1">Periplasmic nitrate reductase</fullName>
        <ecNumber evidence="1">1.9.6.1</ecNumber>
    </recommendedName>
</protein>
<gene>
    <name evidence="1" type="primary">napA</name>
    <name type="ordered locus">SEN2242</name>
</gene>
<accession>B5R233</accession>
<organism>
    <name type="scientific">Salmonella enteritidis PT4 (strain P125109)</name>
    <dbReference type="NCBI Taxonomy" id="550537"/>
    <lineage>
        <taxon>Bacteria</taxon>
        <taxon>Pseudomonadati</taxon>
        <taxon>Pseudomonadota</taxon>
        <taxon>Gammaproteobacteria</taxon>
        <taxon>Enterobacterales</taxon>
        <taxon>Enterobacteriaceae</taxon>
        <taxon>Salmonella</taxon>
    </lineage>
</organism>
<name>NAPA_SALEP</name>
<comment type="function">
    <text evidence="1">Catalytic subunit of the periplasmic nitrate reductase complex NapAB. Receives electrons from NapB and catalyzes the reduction of nitrate to nitrite.</text>
</comment>
<comment type="catalytic activity">
    <reaction evidence="1">
        <text>2 Fe(II)-[cytochrome] + nitrate + 2 H(+) = 2 Fe(III)-[cytochrome] + nitrite + H2O</text>
        <dbReference type="Rhea" id="RHEA:12909"/>
        <dbReference type="Rhea" id="RHEA-COMP:11777"/>
        <dbReference type="Rhea" id="RHEA-COMP:11778"/>
        <dbReference type="ChEBI" id="CHEBI:15377"/>
        <dbReference type="ChEBI" id="CHEBI:15378"/>
        <dbReference type="ChEBI" id="CHEBI:16301"/>
        <dbReference type="ChEBI" id="CHEBI:17632"/>
        <dbReference type="ChEBI" id="CHEBI:29033"/>
        <dbReference type="ChEBI" id="CHEBI:29034"/>
        <dbReference type="EC" id="1.9.6.1"/>
    </reaction>
</comment>
<comment type="cofactor">
    <cofactor evidence="1">
        <name>[4Fe-4S] cluster</name>
        <dbReference type="ChEBI" id="CHEBI:49883"/>
    </cofactor>
    <text evidence="1">Binds 1 [4Fe-4S] cluster.</text>
</comment>
<comment type="cofactor">
    <cofactor evidence="1">
        <name>Mo-bis(molybdopterin guanine dinucleotide)</name>
        <dbReference type="ChEBI" id="CHEBI:60539"/>
    </cofactor>
    <text evidence="1">Binds 1 molybdenum-bis(molybdopterin guanine dinucleotide) (Mo-bis-MGD) cofactor per subunit.</text>
</comment>
<comment type="subunit">
    <text evidence="1">Component of the periplasmic nitrate reductase NapAB complex composed of NapA and NapB.</text>
</comment>
<comment type="subcellular location">
    <subcellularLocation>
        <location evidence="1">Periplasm</location>
    </subcellularLocation>
</comment>
<comment type="PTM">
    <text evidence="1">Predicted to be exported by the Tat system. The position of the signal peptide cleavage has not been experimentally proven.</text>
</comment>
<comment type="similarity">
    <text evidence="1">Belongs to the prokaryotic molybdopterin-containing oxidoreductase family. NasA/NapA/NarB subfamily.</text>
</comment>
<feature type="signal peptide" description="Tat-type signal" evidence="1">
    <location>
        <begin position="1"/>
        <end position="31"/>
    </location>
</feature>
<feature type="chain" id="PRO_5000397706" description="Periplasmic nitrate reductase" evidence="1">
    <location>
        <begin position="32"/>
        <end position="828"/>
    </location>
</feature>
<feature type="domain" description="4Fe-4S Mo/W bis-MGD-type" evidence="1">
    <location>
        <begin position="39"/>
        <end position="95"/>
    </location>
</feature>
<feature type="binding site" evidence="1">
    <location>
        <position position="46"/>
    </location>
    <ligand>
        <name>[4Fe-4S] cluster</name>
        <dbReference type="ChEBI" id="CHEBI:49883"/>
    </ligand>
</feature>
<feature type="binding site" evidence="1">
    <location>
        <position position="49"/>
    </location>
    <ligand>
        <name>[4Fe-4S] cluster</name>
        <dbReference type="ChEBI" id="CHEBI:49883"/>
    </ligand>
</feature>
<feature type="binding site" evidence="1">
    <location>
        <position position="53"/>
    </location>
    <ligand>
        <name>[4Fe-4S] cluster</name>
        <dbReference type="ChEBI" id="CHEBI:49883"/>
    </ligand>
</feature>
<feature type="binding site" evidence="1">
    <location>
        <position position="81"/>
    </location>
    <ligand>
        <name>[4Fe-4S] cluster</name>
        <dbReference type="ChEBI" id="CHEBI:49883"/>
    </ligand>
</feature>
<feature type="binding site" evidence="1">
    <location>
        <position position="83"/>
    </location>
    <ligand>
        <name>Mo-bis(molybdopterin guanine dinucleotide)</name>
        <dbReference type="ChEBI" id="CHEBI:60539"/>
    </ligand>
</feature>
<feature type="binding site" evidence="1">
    <location>
        <position position="150"/>
    </location>
    <ligand>
        <name>Mo-bis(molybdopterin guanine dinucleotide)</name>
        <dbReference type="ChEBI" id="CHEBI:60539"/>
    </ligand>
</feature>
<feature type="binding site" evidence="1">
    <location>
        <position position="175"/>
    </location>
    <ligand>
        <name>Mo-bis(molybdopterin guanine dinucleotide)</name>
        <dbReference type="ChEBI" id="CHEBI:60539"/>
    </ligand>
</feature>
<feature type="binding site" evidence="1">
    <location>
        <position position="179"/>
    </location>
    <ligand>
        <name>Mo-bis(molybdopterin guanine dinucleotide)</name>
        <dbReference type="ChEBI" id="CHEBI:60539"/>
    </ligand>
</feature>
<feature type="binding site" evidence="1">
    <location>
        <begin position="212"/>
        <end position="219"/>
    </location>
    <ligand>
        <name>Mo-bis(molybdopterin guanine dinucleotide)</name>
        <dbReference type="ChEBI" id="CHEBI:60539"/>
    </ligand>
</feature>
<feature type="binding site" evidence="1">
    <location>
        <begin position="243"/>
        <end position="247"/>
    </location>
    <ligand>
        <name>Mo-bis(molybdopterin guanine dinucleotide)</name>
        <dbReference type="ChEBI" id="CHEBI:60539"/>
    </ligand>
</feature>
<feature type="binding site" evidence="1">
    <location>
        <begin position="262"/>
        <end position="264"/>
    </location>
    <ligand>
        <name>Mo-bis(molybdopterin guanine dinucleotide)</name>
        <dbReference type="ChEBI" id="CHEBI:60539"/>
    </ligand>
</feature>
<feature type="binding site" evidence="1">
    <location>
        <position position="372"/>
    </location>
    <ligand>
        <name>Mo-bis(molybdopterin guanine dinucleotide)</name>
        <dbReference type="ChEBI" id="CHEBI:60539"/>
    </ligand>
</feature>
<feature type="binding site" evidence="1">
    <location>
        <position position="376"/>
    </location>
    <ligand>
        <name>Mo-bis(molybdopterin guanine dinucleotide)</name>
        <dbReference type="ChEBI" id="CHEBI:60539"/>
    </ligand>
</feature>
<feature type="binding site" evidence="1">
    <location>
        <position position="482"/>
    </location>
    <ligand>
        <name>Mo-bis(molybdopterin guanine dinucleotide)</name>
        <dbReference type="ChEBI" id="CHEBI:60539"/>
    </ligand>
</feature>
<feature type="binding site" evidence="1">
    <location>
        <begin position="508"/>
        <end position="509"/>
    </location>
    <ligand>
        <name>Mo-bis(molybdopterin guanine dinucleotide)</name>
        <dbReference type="ChEBI" id="CHEBI:60539"/>
    </ligand>
</feature>
<feature type="binding site" evidence="1">
    <location>
        <position position="531"/>
    </location>
    <ligand>
        <name>Mo-bis(molybdopterin guanine dinucleotide)</name>
        <dbReference type="ChEBI" id="CHEBI:60539"/>
    </ligand>
</feature>
<feature type="binding site" evidence="1">
    <location>
        <position position="558"/>
    </location>
    <ligand>
        <name>Mo-bis(molybdopterin guanine dinucleotide)</name>
        <dbReference type="ChEBI" id="CHEBI:60539"/>
    </ligand>
</feature>
<feature type="binding site" evidence="1">
    <location>
        <begin position="718"/>
        <end position="727"/>
    </location>
    <ligand>
        <name>Mo-bis(molybdopterin guanine dinucleotide)</name>
        <dbReference type="ChEBI" id="CHEBI:60539"/>
    </ligand>
</feature>
<feature type="binding site" evidence="1">
    <location>
        <position position="794"/>
    </location>
    <ligand>
        <name>substrate</name>
    </ligand>
</feature>
<feature type="binding site" evidence="1">
    <location>
        <position position="802"/>
    </location>
    <ligand>
        <name>Mo-bis(molybdopterin guanine dinucleotide)</name>
        <dbReference type="ChEBI" id="CHEBI:60539"/>
    </ligand>
</feature>
<feature type="binding site" evidence="1">
    <location>
        <position position="819"/>
    </location>
    <ligand>
        <name>Mo-bis(molybdopterin guanine dinucleotide)</name>
        <dbReference type="ChEBI" id="CHEBI:60539"/>
    </ligand>
</feature>
<evidence type="ECO:0000255" key="1">
    <source>
        <dbReference type="HAMAP-Rule" id="MF_01630"/>
    </source>
</evidence>